<protein>
    <recommendedName>
        <fullName evidence="1">Bacilliredoxin BC_4151</fullName>
    </recommendedName>
</protein>
<evidence type="ECO:0000305" key="1"/>
<proteinExistence type="inferred from homology"/>
<feature type="chain" id="PRO_0000271978" description="Bacilliredoxin BC_4151">
    <location>
        <begin position="1"/>
        <end position="144"/>
    </location>
</feature>
<accession>Q818U0</accession>
<reference key="1">
    <citation type="journal article" date="2003" name="Nature">
        <title>Genome sequence of Bacillus cereus and comparative analysis with Bacillus anthracis.</title>
        <authorList>
            <person name="Ivanova N."/>
            <person name="Sorokin A."/>
            <person name="Anderson I."/>
            <person name="Galleron N."/>
            <person name="Candelon B."/>
            <person name="Kapatral V."/>
            <person name="Bhattacharyya A."/>
            <person name="Reznik G."/>
            <person name="Mikhailova N."/>
            <person name="Lapidus A."/>
            <person name="Chu L."/>
            <person name="Mazur M."/>
            <person name="Goltsman E."/>
            <person name="Larsen N."/>
            <person name="D'Souza M."/>
            <person name="Walunas T."/>
            <person name="Grechkin Y."/>
            <person name="Pusch G."/>
            <person name="Haselkorn R."/>
            <person name="Fonstein M."/>
            <person name="Ehrlich S.D."/>
            <person name="Overbeek R."/>
            <person name="Kyrpides N.C."/>
        </authorList>
    </citation>
    <scope>NUCLEOTIDE SEQUENCE [LARGE SCALE GENOMIC DNA]</scope>
    <source>
        <strain>ATCC 14579 / DSM 31 / CCUG 7414 / JCM 2152 / NBRC 15305 / NCIMB 9373 / NCTC 2599 / NRRL B-3711</strain>
    </source>
</reference>
<sequence>MINFNFFMNDVVRQAREEIVSAGYTELTTPEAVEEAFKRNGTTLVMVNSVCGCAGGIARPAAAHSVHYDKRPNHLVTVFAGQDKEATARAREYFEGYPPSSPSFALLKDGKIVTMVERHEIEGHEPMQVIAKLQSYFEENCEEL</sequence>
<organism>
    <name type="scientific">Bacillus cereus (strain ATCC 14579 / DSM 31 / CCUG 7414 / JCM 2152 / NBRC 15305 / NCIMB 9373 / NCTC 2599 / NRRL B-3711)</name>
    <dbReference type="NCBI Taxonomy" id="226900"/>
    <lineage>
        <taxon>Bacteria</taxon>
        <taxon>Bacillati</taxon>
        <taxon>Bacillota</taxon>
        <taxon>Bacilli</taxon>
        <taxon>Bacillales</taxon>
        <taxon>Bacillaceae</taxon>
        <taxon>Bacillus</taxon>
        <taxon>Bacillus cereus group</taxon>
    </lineage>
</organism>
<comment type="similarity">
    <text evidence="1">Belongs to the bacilliredoxin family.</text>
</comment>
<comment type="sequence caution" evidence="1">
    <conflict type="erroneous initiation">
        <sequence resource="EMBL-CDS" id="AAP11067"/>
    </conflict>
</comment>
<dbReference type="EMBL" id="AE016877">
    <property type="protein sequence ID" value="AAP11067.1"/>
    <property type="status" value="ALT_INIT"/>
    <property type="molecule type" value="Genomic_DNA"/>
</dbReference>
<dbReference type="RefSeq" id="NP_833866.1">
    <property type="nucleotide sequence ID" value="NC_004722.1"/>
</dbReference>
<dbReference type="SMR" id="Q818U0"/>
<dbReference type="STRING" id="226900.BC_4151"/>
<dbReference type="DNASU" id="1206496"/>
<dbReference type="KEGG" id="bce:BC4151"/>
<dbReference type="PATRIC" id="fig|226900.8.peg.4292"/>
<dbReference type="HOGENOM" id="CLU_132521_0_0_9"/>
<dbReference type="OrthoDB" id="9793981at2"/>
<dbReference type="Proteomes" id="UP000001417">
    <property type="component" value="Chromosome"/>
</dbReference>
<dbReference type="GO" id="GO:0045454">
    <property type="term" value="P:cell redox homeostasis"/>
    <property type="evidence" value="ECO:0000250"/>
    <property type="project" value="UniProtKB"/>
</dbReference>
<dbReference type="Gene3D" id="3.40.30.10">
    <property type="entry name" value="Glutaredoxin"/>
    <property type="match status" value="1"/>
</dbReference>
<dbReference type="InterPro" id="IPR009474">
    <property type="entry name" value="BrxB/BrxA"/>
</dbReference>
<dbReference type="NCBIfam" id="TIGR04191">
    <property type="entry name" value="YphP_YqiW"/>
    <property type="match status" value="1"/>
</dbReference>
<dbReference type="PANTHER" id="PTHR40052:SF1">
    <property type="entry name" value="BACILLIREDOXIN BRXB"/>
    <property type="match status" value="1"/>
</dbReference>
<dbReference type="PANTHER" id="PTHR40052">
    <property type="entry name" value="UPF0403 PROTEIN YQIW-RELATED"/>
    <property type="match status" value="1"/>
</dbReference>
<dbReference type="Pfam" id="PF06491">
    <property type="entry name" value="Disulph_isomer"/>
    <property type="match status" value="1"/>
</dbReference>
<gene>
    <name type="ordered locus">BC_4151</name>
</gene>
<keyword id="KW-1185">Reference proteome</keyword>
<name>Y4151_BACCR</name>